<accession>Q0WX00</accession>
<accession>Q9ZW99</accession>
<keyword id="KW-0025">Alternative splicing</keyword>
<keyword id="KW-0156">Chromatin regulator</keyword>
<keyword id="KW-0479">Metal-binding</keyword>
<keyword id="KW-0539">Nucleus</keyword>
<keyword id="KW-1185">Reference proteome</keyword>
<keyword id="KW-0678">Repressor</keyword>
<keyword id="KW-0804">Transcription</keyword>
<keyword id="KW-0805">Transcription regulation</keyword>
<keyword id="KW-0808">Transferase</keyword>
<keyword id="KW-0833">Ubl conjugation pathway</keyword>
<keyword id="KW-0862">Zinc</keyword>
<keyword id="KW-0863">Zinc-finger</keyword>
<feature type="chain" id="PRO_0000397097" description="Putative E3 ubiquitin-protein ligase RING1b">
    <location>
        <begin position="1"/>
        <end position="460"/>
    </location>
</feature>
<feature type="zinc finger region" description="RING-type" evidence="2">
    <location>
        <begin position="103"/>
        <end position="143"/>
    </location>
</feature>
<feature type="region of interest" description="Disordered" evidence="3">
    <location>
        <begin position="1"/>
        <end position="85"/>
    </location>
</feature>
<feature type="region of interest" description="Disordered" evidence="3">
    <location>
        <begin position="196"/>
        <end position="300"/>
    </location>
</feature>
<feature type="compositionally biased region" description="Basic and acidic residues" evidence="3">
    <location>
        <begin position="21"/>
        <end position="31"/>
    </location>
</feature>
<feature type="compositionally biased region" description="Acidic residues" evidence="3">
    <location>
        <begin position="32"/>
        <end position="51"/>
    </location>
</feature>
<feature type="compositionally biased region" description="Acidic residues" evidence="3">
    <location>
        <begin position="59"/>
        <end position="71"/>
    </location>
</feature>
<feature type="compositionally biased region" description="Basic residues" evidence="3">
    <location>
        <begin position="220"/>
        <end position="234"/>
    </location>
</feature>
<feature type="compositionally biased region" description="Acidic residues" evidence="3">
    <location>
        <begin position="240"/>
        <end position="249"/>
    </location>
</feature>
<feature type="compositionally biased region" description="Basic and acidic residues" evidence="3">
    <location>
        <begin position="250"/>
        <end position="265"/>
    </location>
</feature>
<feature type="compositionally biased region" description="Low complexity" evidence="3">
    <location>
        <begin position="276"/>
        <end position="290"/>
    </location>
</feature>
<comment type="function">
    <text evidence="1">Putative E3 ubiquitin-protein ligase that mediates monoubiquitination of 'Lys-119' of histone H2A (H2AK119ub), thereby playing a central role in histone code and gene regulation.</text>
</comment>
<comment type="function">
    <text evidence="4">As part of the PRC1-like complex, repress class I KNOX gene expression. PcG PRC1 complex maintains the transcriptionally repressive state of many genes, including Hox genes, throughout development. PcG PRC1 complex acts via chromatin remodeling and modification of histones, rendering chromatin heritably changed in its expressibility.</text>
</comment>
<comment type="catalytic activity">
    <reaction>
        <text>S-ubiquitinyl-[E2 ubiquitin-conjugating enzyme]-L-cysteine + [acceptor protein]-L-lysine = [E2 ubiquitin-conjugating enzyme]-L-cysteine + N(6)-ubiquitinyl-[acceptor protein]-L-lysine.</text>
        <dbReference type="EC" id="2.3.2.27"/>
    </reaction>
</comment>
<comment type="pathway">
    <text>Protein modification; protein ubiquitination.</text>
</comment>
<comment type="subunit">
    <text evidence="4">Heterodimer with RING1A. Interacts with CLF. Component of the PRC1-like complex, at least composed of RING1A, RING1B and LHP1.</text>
</comment>
<comment type="subcellular location">
    <subcellularLocation>
        <location evidence="4">Nucleus</location>
    </subcellularLocation>
</comment>
<comment type="alternative products">
    <event type="alternative splicing"/>
    <isoform>
        <id>Q0WX00-1</id>
        <name>1</name>
        <sequence type="displayed"/>
    </isoform>
    <text>A number of isoforms are produced. According to EST sequences.</text>
</comment>
<comment type="domain">
    <text evidence="1">The RING-type zinc finger domain mediates binding to an E2 ubiquitin-conjugating enzyme.</text>
</comment>
<comment type="disruption phenotype">
    <text evidence="4">Normal phenotype. Drastic growth defects like ectopic meristem formation and sterility when associated with the disruption of RING1A.</text>
</comment>
<comment type="sequence caution" evidence="5">
    <conflict type="erroneous gene model prediction">
        <sequence resource="EMBL-CDS" id="AAD10691"/>
    </conflict>
</comment>
<reference key="1">
    <citation type="journal article" date="2000" name="Nature">
        <title>Sequence and analysis of chromosome 1 of the plant Arabidopsis thaliana.</title>
        <authorList>
            <person name="Theologis A."/>
            <person name="Ecker J.R."/>
            <person name="Palm C.J."/>
            <person name="Federspiel N.A."/>
            <person name="Kaul S."/>
            <person name="White O."/>
            <person name="Alonso J."/>
            <person name="Altafi H."/>
            <person name="Araujo R."/>
            <person name="Bowman C.L."/>
            <person name="Brooks S.Y."/>
            <person name="Buehler E."/>
            <person name="Chan A."/>
            <person name="Chao Q."/>
            <person name="Chen H."/>
            <person name="Cheuk R.F."/>
            <person name="Chin C.W."/>
            <person name="Chung M.K."/>
            <person name="Conn L."/>
            <person name="Conway A.B."/>
            <person name="Conway A.R."/>
            <person name="Creasy T.H."/>
            <person name="Dewar K."/>
            <person name="Dunn P."/>
            <person name="Etgu P."/>
            <person name="Feldblyum T.V."/>
            <person name="Feng J.-D."/>
            <person name="Fong B."/>
            <person name="Fujii C.Y."/>
            <person name="Gill J.E."/>
            <person name="Goldsmith A.D."/>
            <person name="Haas B."/>
            <person name="Hansen N.F."/>
            <person name="Hughes B."/>
            <person name="Huizar L."/>
            <person name="Hunter J.L."/>
            <person name="Jenkins J."/>
            <person name="Johnson-Hopson C."/>
            <person name="Khan S."/>
            <person name="Khaykin E."/>
            <person name="Kim C.J."/>
            <person name="Koo H.L."/>
            <person name="Kremenetskaia I."/>
            <person name="Kurtz D.B."/>
            <person name="Kwan A."/>
            <person name="Lam B."/>
            <person name="Langin-Hooper S."/>
            <person name="Lee A."/>
            <person name="Lee J.M."/>
            <person name="Lenz C.A."/>
            <person name="Li J.H."/>
            <person name="Li Y.-P."/>
            <person name="Lin X."/>
            <person name="Liu S.X."/>
            <person name="Liu Z.A."/>
            <person name="Luros J.S."/>
            <person name="Maiti R."/>
            <person name="Marziali A."/>
            <person name="Militscher J."/>
            <person name="Miranda M."/>
            <person name="Nguyen M."/>
            <person name="Nierman W.C."/>
            <person name="Osborne B.I."/>
            <person name="Pai G."/>
            <person name="Peterson J."/>
            <person name="Pham P.K."/>
            <person name="Rizzo M."/>
            <person name="Rooney T."/>
            <person name="Rowley D."/>
            <person name="Sakano H."/>
            <person name="Salzberg S.L."/>
            <person name="Schwartz J.R."/>
            <person name="Shinn P."/>
            <person name="Southwick A.M."/>
            <person name="Sun H."/>
            <person name="Tallon L.J."/>
            <person name="Tambunga G."/>
            <person name="Toriumi M.J."/>
            <person name="Town C.D."/>
            <person name="Utterback T."/>
            <person name="Van Aken S."/>
            <person name="Vaysberg M."/>
            <person name="Vysotskaia V.S."/>
            <person name="Walker M."/>
            <person name="Wu D."/>
            <person name="Yu G."/>
            <person name="Fraser C.M."/>
            <person name="Venter J.C."/>
            <person name="Davis R.W."/>
        </authorList>
    </citation>
    <scope>NUCLEOTIDE SEQUENCE [LARGE SCALE GENOMIC DNA]</scope>
    <source>
        <strain>cv. Columbia</strain>
    </source>
</reference>
<reference key="2">
    <citation type="journal article" date="2017" name="Plant J.">
        <title>Araport11: a complete reannotation of the Arabidopsis thaliana reference genome.</title>
        <authorList>
            <person name="Cheng C.Y."/>
            <person name="Krishnakumar V."/>
            <person name="Chan A.P."/>
            <person name="Thibaud-Nissen F."/>
            <person name="Schobel S."/>
            <person name="Town C.D."/>
        </authorList>
    </citation>
    <scope>GENOME REANNOTATION</scope>
    <source>
        <strain>cv. Columbia</strain>
    </source>
</reference>
<reference key="3">
    <citation type="submission" date="2006-07" db="EMBL/GenBank/DDBJ databases">
        <title>Large-scale analysis of RIKEN Arabidopsis full-length (RAFL) cDNAs.</title>
        <authorList>
            <person name="Totoki Y."/>
            <person name="Seki M."/>
            <person name="Ishida J."/>
            <person name="Nakajima M."/>
            <person name="Enju A."/>
            <person name="Kamiya A."/>
            <person name="Narusaka M."/>
            <person name="Shin-i T."/>
            <person name="Nakagawa M."/>
            <person name="Sakamoto N."/>
            <person name="Oishi K."/>
            <person name="Kohara Y."/>
            <person name="Kobayashi M."/>
            <person name="Toyoda A."/>
            <person name="Sakaki Y."/>
            <person name="Sakurai T."/>
            <person name="Iida K."/>
            <person name="Akiyama K."/>
            <person name="Satou M."/>
            <person name="Toyoda T."/>
            <person name="Konagaya A."/>
            <person name="Carninci P."/>
            <person name="Kawai J."/>
            <person name="Hayashizaki Y."/>
            <person name="Shinozaki K."/>
        </authorList>
    </citation>
    <scope>NUCLEOTIDE SEQUENCE [LARGE SCALE MRNA]</scope>
    <source>
        <strain>cv. Columbia</strain>
    </source>
</reference>
<reference key="4">
    <citation type="journal article" date="2002" name="Genome Biol.">
        <title>Evaluation and classification of RING-finger domains encoded by the Arabidopsis genome.</title>
        <authorList>
            <person name="Kosarev P."/>
            <person name="Mayer K.F.X."/>
            <person name="Hardtke C.S."/>
        </authorList>
    </citation>
    <scope>GENE FAMILY ORGANIZATION</scope>
</reference>
<reference key="5">
    <citation type="journal article" date="2008" name="Curr. Biol.">
        <title>Polycomb silencing of KNOX genes confines shoot stem cell niches in Arabidopsis.</title>
        <authorList>
            <person name="Xu L."/>
            <person name="Shen W.H."/>
        </authorList>
    </citation>
    <scope>FUNCTION</scope>
    <scope>SUBCELLULAR LOCATION</scope>
    <scope>INTERACTION WITH CLF</scope>
    <scope>COMPONENT OF THE PRC1-LIKE COMPLEX</scope>
    <scope>DISRUPTION PHENOTYPE</scope>
</reference>
<gene>
    <name type="primary">RING1B</name>
    <name type="synonym">RF5</name>
    <name type="ordered locus">At1g03770</name>
    <name type="ORF">F21M11.30</name>
</gene>
<name>RNG1B_ARATH</name>
<protein>
    <recommendedName>
        <fullName>Putative E3 ubiquitin-protein ligase RING1b</fullName>
        <ecNumber>2.3.2.27</ecNumber>
    </recommendedName>
    <alternativeName>
        <fullName>Polycomb complex protein RING1b</fullName>
    </alternativeName>
    <alternativeName>
        <fullName>Protein RING1b</fullName>
        <shortName>AtRING1b</shortName>
    </alternativeName>
    <alternativeName>
        <fullName evidence="5">RING-type E3 ubiquitin transferase RING1b</fullName>
    </alternativeName>
    <alternativeName>
        <fullName>Ring finger protein 5</fullName>
    </alternativeName>
</protein>
<organism>
    <name type="scientific">Arabidopsis thaliana</name>
    <name type="common">Mouse-ear cress</name>
    <dbReference type="NCBI Taxonomy" id="3702"/>
    <lineage>
        <taxon>Eukaryota</taxon>
        <taxon>Viridiplantae</taxon>
        <taxon>Streptophyta</taxon>
        <taxon>Embryophyta</taxon>
        <taxon>Tracheophyta</taxon>
        <taxon>Spermatophyta</taxon>
        <taxon>Magnoliopsida</taxon>
        <taxon>eudicotyledons</taxon>
        <taxon>Gunneridae</taxon>
        <taxon>Pentapetalae</taxon>
        <taxon>rosids</taxon>
        <taxon>malvids</taxon>
        <taxon>Brassicales</taxon>
        <taxon>Brassicaceae</taxon>
        <taxon>Camelineae</taxon>
        <taxon>Arabidopsis</taxon>
    </lineage>
</organism>
<sequence>MPSLKSFSAAEEEDDQLGRNSEAERFNPEAVEKEEDPDKMDEKDESGDEEDDVKRDQVEAEDEEALGEEEDSKERSQSSSAGELSESEYMVVDLADICKDVQCSICLGIIRKTRTVMECLHRFCRECIDKSMRLGNNECPTCRKHCASRRSLRDDPNFDALIAALFKNIDKFEEEELNFRQDDEARNKQIQASIAQVSQRQSKALVKRKSVGKGTAILSRSRRSGGGSRRRRNCRNIEQDTSEANDDDDQNKRGKDSSSDEPCERQRKKRSATQPSSSNANNNDNCAGNGTEQTHQRDSRVISPVLVWNSELIAWGRGGTRSNTRQGNNNQGAISKRNARLKRLVEYLGSLEGNSVELDIHLKLVSLDTEGLLNLHEPYLCFRPTLLVKQLREYVARHLKLKAEEVELLVSKDGDTVIGNKTSTEKMQSLQDDETVAKLKVDCISSNGYMIVVYRRKQIA</sequence>
<evidence type="ECO:0000250" key="1"/>
<evidence type="ECO:0000255" key="2">
    <source>
        <dbReference type="PROSITE-ProRule" id="PRU00175"/>
    </source>
</evidence>
<evidence type="ECO:0000256" key="3">
    <source>
        <dbReference type="SAM" id="MobiDB-lite"/>
    </source>
</evidence>
<evidence type="ECO:0000269" key="4">
    <source>
    </source>
</evidence>
<evidence type="ECO:0000305" key="5"/>
<proteinExistence type="evidence at protein level"/>
<dbReference type="EC" id="2.3.2.27"/>
<dbReference type="EMBL" id="AC003027">
    <property type="protein sequence ID" value="AAD10691.1"/>
    <property type="status" value="ALT_SEQ"/>
    <property type="molecule type" value="Genomic_DNA"/>
</dbReference>
<dbReference type="EMBL" id="CP002684">
    <property type="protein sequence ID" value="AEE27608.1"/>
    <property type="molecule type" value="Genomic_DNA"/>
</dbReference>
<dbReference type="EMBL" id="AK226183">
    <property type="protein sequence ID" value="BAE98348.1"/>
    <property type="molecule type" value="mRNA"/>
</dbReference>
<dbReference type="PIR" id="B86168">
    <property type="entry name" value="B86168"/>
</dbReference>
<dbReference type="RefSeq" id="NP_171873.2">
    <molecule id="Q0WX00-1"/>
    <property type="nucleotide sequence ID" value="NM_100256.3"/>
</dbReference>
<dbReference type="SMR" id="Q0WX00"/>
<dbReference type="FunCoup" id="Q0WX00">
    <property type="interactions" value="143"/>
</dbReference>
<dbReference type="STRING" id="3702.Q0WX00"/>
<dbReference type="iPTMnet" id="Q0WX00"/>
<dbReference type="PaxDb" id="3702-AT1G03770.2"/>
<dbReference type="ProteomicsDB" id="227984">
    <molecule id="Q0WX00-1"/>
</dbReference>
<dbReference type="EnsemblPlants" id="AT1G03770.1">
    <molecule id="Q0WX00-1"/>
    <property type="protein sequence ID" value="AT1G03770.1"/>
    <property type="gene ID" value="AT1G03770"/>
</dbReference>
<dbReference type="GeneID" id="839413"/>
<dbReference type="Gramene" id="AT1G03770.1">
    <molecule id="Q0WX00-1"/>
    <property type="protein sequence ID" value="AT1G03770.1"/>
    <property type="gene ID" value="AT1G03770"/>
</dbReference>
<dbReference type="KEGG" id="ath:AT1G03770"/>
<dbReference type="Araport" id="AT1G03770"/>
<dbReference type="TAIR" id="AT1G03770">
    <property type="gene designation" value="RING1B"/>
</dbReference>
<dbReference type="eggNOG" id="KOG0311">
    <property type="taxonomic scope" value="Eukaryota"/>
</dbReference>
<dbReference type="InParanoid" id="Q0WX00"/>
<dbReference type="OMA" id="CISSHGY"/>
<dbReference type="PhylomeDB" id="Q0WX00"/>
<dbReference type="UniPathway" id="UPA00143"/>
<dbReference type="PRO" id="PR:Q0WX00"/>
<dbReference type="Proteomes" id="UP000006548">
    <property type="component" value="Chromosome 1"/>
</dbReference>
<dbReference type="ExpressionAtlas" id="Q0WX00">
    <property type="expression patterns" value="baseline and differential"/>
</dbReference>
<dbReference type="GO" id="GO:0035102">
    <property type="term" value="C:PRC1 complex"/>
    <property type="evidence" value="ECO:0000353"/>
    <property type="project" value="UniProtKB"/>
</dbReference>
<dbReference type="GO" id="GO:0016740">
    <property type="term" value="F:transferase activity"/>
    <property type="evidence" value="ECO:0007669"/>
    <property type="project" value="UniProtKB-KW"/>
</dbReference>
<dbReference type="GO" id="GO:0008270">
    <property type="term" value="F:zinc ion binding"/>
    <property type="evidence" value="ECO:0007669"/>
    <property type="project" value="UniProtKB-KW"/>
</dbReference>
<dbReference type="GO" id="GO:0001709">
    <property type="term" value="P:cell fate determination"/>
    <property type="evidence" value="ECO:0000315"/>
    <property type="project" value="UniProtKB"/>
</dbReference>
<dbReference type="GO" id="GO:0006325">
    <property type="term" value="P:chromatin organization"/>
    <property type="evidence" value="ECO:0007669"/>
    <property type="project" value="UniProtKB-KW"/>
</dbReference>
<dbReference type="GO" id="GO:0010076">
    <property type="term" value="P:maintenance of floral meristem identity"/>
    <property type="evidence" value="ECO:0000315"/>
    <property type="project" value="UniProtKB"/>
</dbReference>
<dbReference type="GO" id="GO:0010077">
    <property type="term" value="P:maintenance of inflorescence meristem identity"/>
    <property type="evidence" value="ECO:0000315"/>
    <property type="project" value="UniProtKB"/>
</dbReference>
<dbReference type="GO" id="GO:0010492">
    <property type="term" value="P:maintenance of shoot apical meristem identity"/>
    <property type="evidence" value="ECO:0000315"/>
    <property type="project" value="UniProtKB"/>
</dbReference>
<dbReference type="GO" id="GO:0045892">
    <property type="term" value="P:negative regulation of DNA-templated transcription"/>
    <property type="evidence" value="ECO:0000316"/>
    <property type="project" value="UniProtKB"/>
</dbReference>
<dbReference type="GO" id="GO:0016567">
    <property type="term" value="P:protein ubiquitination"/>
    <property type="evidence" value="ECO:0007669"/>
    <property type="project" value="UniProtKB-UniPathway"/>
</dbReference>
<dbReference type="CDD" id="cd16531">
    <property type="entry name" value="RING-HC_RING1-like"/>
    <property type="match status" value="1"/>
</dbReference>
<dbReference type="FunFam" id="3.30.40.10:FF:001067">
    <property type="entry name" value="Putative E3 ubiquitin-protein ligase RING1a"/>
    <property type="match status" value="1"/>
</dbReference>
<dbReference type="Gene3D" id="3.30.40.10">
    <property type="entry name" value="Zinc/RING finger domain, C3HC4 (zinc finger)"/>
    <property type="match status" value="1"/>
</dbReference>
<dbReference type="InterPro" id="IPR044592">
    <property type="entry name" value="RING1A/B"/>
</dbReference>
<dbReference type="InterPro" id="IPR001841">
    <property type="entry name" value="Znf_RING"/>
</dbReference>
<dbReference type="InterPro" id="IPR013083">
    <property type="entry name" value="Znf_RING/FYVE/PHD"/>
</dbReference>
<dbReference type="InterPro" id="IPR017907">
    <property type="entry name" value="Znf_RING_CS"/>
</dbReference>
<dbReference type="PANTHER" id="PTHR46537:SF1">
    <property type="entry name" value="E3 UBIQUITIN-PROTEIN LIGASE RING1B-RELATED"/>
    <property type="match status" value="1"/>
</dbReference>
<dbReference type="PANTHER" id="PTHR46537">
    <property type="entry name" value="OS11G0578200 PROTEIN"/>
    <property type="match status" value="1"/>
</dbReference>
<dbReference type="Pfam" id="PF13923">
    <property type="entry name" value="zf-C3HC4_2"/>
    <property type="match status" value="1"/>
</dbReference>
<dbReference type="SMART" id="SM00184">
    <property type="entry name" value="RING"/>
    <property type="match status" value="1"/>
</dbReference>
<dbReference type="SUPFAM" id="SSF57850">
    <property type="entry name" value="RING/U-box"/>
    <property type="match status" value="1"/>
</dbReference>
<dbReference type="PROSITE" id="PS00518">
    <property type="entry name" value="ZF_RING_1"/>
    <property type="match status" value="1"/>
</dbReference>
<dbReference type="PROSITE" id="PS50089">
    <property type="entry name" value="ZF_RING_2"/>
    <property type="match status" value="1"/>
</dbReference>